<protein>
    <recommendedName>
        <fullName evidence="1">Small ribosomal subunit protein uS10</fullName>
    </recommendedName>
    <alternativeName>
        <fullName evidence="2">30S ribosomal protein S10</fullName>
    </alternativeName>
</protein>
<accession>B1KSM6</accession>
<proteinExistence type="inferred from homology"/>
<feature type="chain" id="PRO_1000127106" description="Small ribosomal subunit protein uS10">
    <location>
        <begin position="1"/>
        <end position="102"/>
    </location>
</feature>
<evidence type="ECO:0000255" key="1">
    <source>
        <dbReference type="HAMAP-Rule" id="MF_00508"/>
    </source>
</evidence>
<evidence type="ECO:0000305" key="2"/>
<name>RS10_CLOBM</name>
<dbReference type="EMBL" id="CP000962">
    <property type="protein sequence ID" value="ACA55983.1"/>
    <property type="molecule type" value="Genomic_DNA"/>
</dbReference>
<dbReference type="RefSeq" id="WP_003357250.1">
    <property type="nucleotide sequence ID" value="NC_010520.1"/>
</dbReference>
<dbReference type="SMR" id="B1KSM6"/>
<dbReference type="GeneID" id="92940251"/>
<dbReference type="KEGG" id="cbl:CLK_2925"/>
<dbReference type="HOGENOM" id="CLU_122625_1_3_9"/>
<dbReference type="GO" id="GO:1990904">
    <property type="term" value="C:ribonucleoprotein complex"/>
    <property type="evidence" value="ECO:0007669"/>
    <property type="project" value="UniProtKB-KW"/>
</dbReference>
<dbReference type="GO" id="GO:0005840">
    <property type="term" value="C:ribosome"/>
    <property type="evidence" value="ECO:0007669"/>
    <property type="project" value="UniProtKB-KW"/>
</dbReference>
<dbReference type="GO" id="GO:0003735">
    <property type="term" value="F:structural constituent of ribosome"/>
    <property type="evidence" value="ECO:0007669"/>
    <property type="project" value="InterPro"/>
</dbReference>
<dbReference type="GO" id="GO:0000049">
    <property type="term" value="F:tRNA binding"/>
    <property type="evidence" value="ECO:0007669"/>
    <property type="project" value="UniProtKB-UniRule"/>
</dbReference>
<dbReference type="GO" id="GO:0006412">
    <property type="term" value="P:translation"/>
    <property type="evidence" value="ECO:0007669"/>
    <property type="project" value="UniProtKB-UniRule"/>
</dbReference>
<dbReference type="FunFam" id="3.30.70.600:FF:000001">
    <property type="entry name" value="30S ribosomal protein S10"/>
    <property type="match status" value="1"/>
</dbReference>
<dbReference type="Gene3D" id="3.30.70.600">
    <property type="entry name" value="Ribosomal protein S10 domain"/>
    <property type="match status" value="1"/>
</dbReference>
<dbReference type="HAMAP" id="MF_00508">
    <property type="entry name" value="Ribosomal_uS10"/>
    <property type="match status" value="1"/>
</dbReference>
<dbReference type="InterPro" id="IPR001848">
    <property type="entry name" value="Ribosomal_uS10"/>
</dbReference>
<dbReference type="InterPro" id="IPR018268">
    <property type="entry name" value="Ribosomal_uS10_CS"/>
</dbReference>
<dbReference type="InterPro" id="IPR027486">
    <property type="entry name" value="Ribosomal_uS10_dom"/>
</dbReference>
<dbReference type="InterPro" id="IPR036838">
    <property type="entry name" value="Ribosomal_uS10_dom_sf"/>
</dbReference>
<dbReference type="NCBIfam" id="NF001861">
    <property type="entry name" value="PRK00596.1"/>
    <property type="match status" value="1"/>
</dbReference>
<dbReference type="NCBIfam" id="TIGR01049">
    <property type="entry name" value="rpsJ_bact"/>
    <property type="match status" value="1"/>
</dbReference>
<dbReference type="PANTHER" id="PTHR11700">
    <property type="entry name" value="30S RIBOSOMAL PROTEIN S10 FAMILY MEMBER"/>
    <property type="match status" value="1"/>
</dbReference>
<dbReference type="Pfam" id="PF00338">
    <property type="entry name" value="Ribosomal_S10"/>
    <property type="match status" value="1"/>
</dbReference>
<dbReference type="PRINTS" id="PR00971">
    <property type="entry name" value="RIBOSOMALS10"/>
</dbReference>
<dbReference type="SMART" id="SM01403">
    <property type="entry name" value="Ribosomal_S10"/>
    <property type="match status" value="1"/>
</dbReference>
<dbReference type="SUPFAM" id="SSF54999">
    <property type="entry name" value="Ribosomal protein S10"/>
    <property type="match status" value="1"/>
</dbReference>
<dbReference type="PROSITE" id="PS00361">
    <property type="entry name" value="RIBOSOMAL_S10"/>
    <property type="match status" value="1"/>
</dbReference>
<sequence length="102" mass="11434">MAKQKIRIRLKAFDHSLLDQSALKIVETAKTTGAKVAGPVPLPTEKDIVTILRAPHKYKDAREQFEIRTHKRLIDIISPSPKTVDALMRLDLPAGVDIEIKL</sequence>
<keyword id="KW-0687">Ribonucleoprotein</keyword>
<keyword id="KW-0689">Ribosomal protein</keyword>
<organism>
    <name type="scientific">Clostridium botulinum (strain Loch Maree / Type A3)</name>
    <dbReference type="NCBI Taxonomy" id="498214"/>
    <lineage>
        <taxon>Bacteria</taxon>
        <taxon>Bacillati</taxon>
        <taxon>Bacillota</taxon>
        <taxon>Clostridia</taxon>
        <taxon>Eubacteriales</taxon>
        <taxon>Clostridiaceae</taxon>
        <taxon>Clostridium</taxon>
    </lineage>
</organism>
<gene>
    <name evidence="1" type="primary">rpsJ</name>
    <name type="ordered locus">CLK_2925</name>
</gene>
<comment type="function">
    <text evidence="1">Involved in the binding of tRNA to the ribosomes.</text>
</comment>
<comment type="subunit">
    <text evidence="1">Part of the 30S ribosomal subunit.</text>
</comment>
<comment type="similarity">
    <text evidence="1">Belongs to the universal ribosomal protein uS10 family.</text>
</comment>
<reference key="1">
    <citation type="journal article" date="2007" name="PLoS ONE">
        <title>Analysis of the neurotoxin complex genes in Clostridium botulinum A1-A4 and B1 strains: BoNT/A3, /Ba4 and /B1 clusters are located within plasmids.</title>
        <authorList>
            <person name="Smith T.J."/>
            <person name="Hill K.K."/>
            <person name="Foley B.T."/>
            <person name="Detter J.C."/>
            <person name="Munk A.C."/>
            <person name="Bruce D.C."/>
            <person name="Doggett N.A."/>
            <person name="Smith L.A."/>
            <person name="Marks J.D."/>
            <person name="Xie G."/>
            <person name="Brettin T.S."/>
        </authorList>
    </citation>
    <scope>NUCLEOTIDE SEQUENCE [LARGE SCALE GENOMIC DNA]</scope>
    <source>
        <strain>Loch Maree / Type A3</strain>
    </source>
</reference>